<comment type="function">
    <text evidence="1">Catalyzes the methylthiolation of an aspartic acid residue of ribosomal protein uS12.</text>
</comment>
<comment type="catalytic activity">
    <reaction evidence="1">
        <text>L-aspartate(89)-[ribosomal protein uS12]-hydrogen + (sulfur carrier)-SH + AH2 + 2 S-adenosyl-L-methionine = 3-methylsulfanyl-L-aspartate(89)-[ribosomal protein uS12]-hydrogen + (sulfur carrier)-H + 5'-deoxyadenosine + L-methionine + A + S-adenosyl-L-homocysteine + 2 H(+)</text>
        <dbReference type="Rhea" id="RHEA:37087"/>
        <dbReference type="Rhea" id="RHEA-COMP:10460"/>
        <dbReference type="Rhea" id="RHEA-COMP:10461"/>
        <dbReference type="Rhea" id="RHEA-COMP:14737"/>
        <dbReference type="Rhea" id="RHEA-COMP:14739"/>
        <dbReference type="ChEBI" id="CHEBI:13193"/>
        <dbReference type="ChEBI" id="CHEBI:15378"/>
        <dbReference type="ChEBI" id="CHEBI:17319"/>
        <dbReference type="ChEBI" id="CHEBI:17499"/>
        <dbReference type="ChEBI" id="CHEBI:29917"/>
        <dbReference type="ChEBI" id="CHEBI:29961"/>
        <dbReference type="ChEBI" id="CHEBI:57844"/>
        <dbReference type="ChEBI" id="CHEBI:57856"/>
        <dbReference type="ChEBI" id="CHEBI:59789"/>
        <dbReference type="ChEBI" id="CHEBI:64428"/>
        <dbReference type="ChEBI" id="CHEBI:73599"/>
        <dbReference type="EC" id="2.8.4.4"/>
    </reaction>
</comment>
<comment type="cofactor">
    <cofactor evidence="1">
        <name>[4Fe-4S] cluster</name>
        <dbReference type="ChEBI" id="CHEBI:49883"/>
    </cofactor>
    <text evidence="1">Binds 2 [4Fe-4S] clusters. One cluster is coordinated with 3 cysteines and an exchangeable S-adenosyl-L-methionine.</text>
</comment>
<comment type="subcellular location">
    <subcellularLocation>
        <location evidence="1">Cytoplasm</location>
    </subcellularLocation>
</comment>
<comment type="similarity">
    <text evidence="1">Belongs to the methylthiotransferase family. RimO subfamily.</text>
</comment>
<gene>
    <name evidence="1" type="primary">rimO</name>
    <name type="ordered locus">EC55989_0880</name>
</gene>
<name>RIMO_ECO55</name>
<accession>B7LCB8</accession>
<keyword id="KW-0004">4Fe-4S</keyword>
<keyword id="KW-0963">Cytoplasm</keyword>
<keyword id="KW-0408">Iron</keyword>
<keyword id="KW-0411">Iron-sulfur</keyword>
<keyword id="KW-0479">Metal-binding</keyword>
<keyword id="KW-1185">Reference proteome</keyword>
<keyword id="KW-0949">S-adenosyl-L-methionine</keyword>
<keyword id="KW-0808">Transferase</keyword>
<evidence type="ECO:0000255" key="1">
    <source>
        <dbReference type="HAMAP-Rule" id="MF_01865"/>
    </source>
</evidence>
<evidence type="ECO:0000255" key="2">
    <source>
        <dbReference type="PROSITE-ProRule" id="PRU01266"/>
    </source>
</evidence>
<proteinExistence type="inferred from homology"/>
<sequence length="441" mass="49582">MSKVTPQPKIGFVSLGCPKNLVDSERILTELRTEGYDVVPSYDDADMVIVNTCGFIDSAVQESLEAIGEALNENGKVIVTGCLGAKEDQIREVHPKVLEITGPHSYEQVLEHVHHYVPKPKHNPFLSLVPEQGVKLTPRHYAYLKISEGCNHRCTFCIIPSMRGDLVSRPIGEVLSEAKRLVDAGVKEILVISQDTSAYGVDVKHRTGFHNGEPVKTSMVSLCEQLSKLGIWTRLHYVYPYPHVDDVIPLMAEGKILPYLDIPLQHASPRILKLMKRPGSVDRQLARIKQWREICPELTLRSTFIVGFPGETEEDFQMLLDFLKEARLDRVGCFKYSPVEGADANALPDQVPEEVKEERWNRFMQLQQQISAERLQEKVGREILVIIDEVDEEGAIGRSMADAPEIDGAVYLNGETNVKPGDILRVKVEHADEYDLWGSRV</sequence>
<organism>
    <name type="scientific">Escherichia coli (strain 55989 / EAEC)</name>
    <dbReference type="NCBI Taxonomy" id="585055"/>
    <lineage>
        <taxon>Bacteria</taxon>
        <taxon>Pseudomonadati</taxon>
        <taxon>Pseudomonadota</taxon>
        <taxon>Gammaproteobacteria</taxon>
        <taxon>Enterobacterales</taxon>
        <taxon>Enterobacteriaceae</taxon>
        <taxon>Escherichia</taxon>
    </lineage>
</organism>
<protein>
    <recommendedName>
        <fullName evidence="1">Ribosomal protein uS12 methylthiotransferase RimO</fullName>
        <shortName evidence="1">uS12 MTTase</shortName>
        <shortName evidence="1">uS12 methylthiotransferase</shortName>
        <ecNumber evidence="1">2.8.4.4</ecNumber>
    </recommendedName>
    <alternativeName>
        <fullName evidence="1">Ribosomal protein uS12 (aspartate-C(3))-methylthiotransferase</fullName>
    </alternativeName>
    <alternativeName>
        <fullName evidence="1">Ribosome maturation factor RimO</fullName>
    </alternativeName>
</protein>
<reference key="1">
    <citation type="journal article" date="2009" name="PLoS Genet.">
        <title>Organised genome dynamics in the Escherichia coli species results in highly diverse adaptive paths.</title>
        <authorList>
            <person name="Touchon M."/>
            <person name="Hoede C."/>
            <person name="Tenaillon O."/>
            <person name="Barbe V."/>
            <person name="Baeriswyl S."/>
            <person name="Bidet P."/>
            <person name="Bingen E."/>
            <person name="Bonacorsi S."/>
            <person name="Bouchier C."/>
            <person name="Bouvet O."/>
            <person name="Calteau A."/>
            <person name="Chiapello H."/>
            <person name="Clermont O."/>
            <person name="Cruveiller S."/>
            <person name="Danchin A."/>
            <person name="Diard M."/>
            <person name="Dossat C."/>
            <person name="Karoui M.E."/>
            <person name="Frapy E."/>
            <person name="Garry L."/>
            <person name="Ghigo J.M."/>
            <person name="Gilles A.M."/>
            <person name="Johnson J."/>
            <person name="Le Bouguenec C."/>
            <person name="Lescat M."/>
            <person name="Mangenot S."/>
            <person name="Martinez-Jehanne V."/>
            <person name="Matic I."/>
            <person name="Nassif X."/>
            <person name="Oztas S."/>
            <person name="Petit M.A."/>
            <person name="Pichon C."/>
            <person name="Rouy Z."/>
            <person name="Ruf C.S."/>
            <person name="Schneider D."/>
            <person name="Tourret J."/>
            <person name="Vacherie B."/>
            <person name="Vallenet D."/>
            <person name="Medigue C."/>
            <person name="Rocha E.P.C."/>
            <person name="Denamur E."/>
        </authorList>
    </citation>
    <scope>NUCLEOTIDE SEQUENCE [LARGE SCALE GENOMIC DNA]</scope>
    <source>
        <strain>55989 / EAEC</strain>
    </source>
</reference>
<feature type="chain" id="PRO_0000374816" description="Ribosomal protein uS12 methylthiotransferase RimO">
    <location>
        <begin position="1"/>
        <end position="441"/>
    </location>
</feature>
<feature type="domain" description="MTTase N-terminal" evidence="1">
    <location>
        <begin position="8"/>
        <end position="118"/>
    </location>
</feature>
<feature type="domain" description="Radical SAM core" evidence="2">
    <location>
        <begin position="136"/>
        <end position="373"/>
    </location>
</feature>
<feature type="domain" description="TRAM" evidence="1">
    <location>
        <begin position="376"/>
        <end position="441"/>
    </location>
</feature>
<feature type="binding site" evidence="1">
    <location>
        <position position="17"/>
    </location>
    <ligand>
        <name>[4Fe-4S] cluster</name>
        <dbReference type="ChEBI" id="CHEBI:49883"/>
        <label>1</label>
    </ligand>
</feature>
<feature type="binding site" evidence="1">
    <location>
        <position position="53"/>
    </location>
    <ligand>
        <name>[4Fe-4S] cluster</name>
        <dbReference type="ChEBI" id="CHEBI:49883"/>
        <label>1</label>
    </ligand>
</feature>
<feature type="binding site" evidence="1">
    <location>
        <position position="82"/>
    </location>
    <ligand>
        <name>[4Fe-4S] cluster</name>
        <dbReference type="ChEBI" id="CHEBI:49883"/>
        <label>1</label>
    </ligand>
</feature>
<feature type="binding site" evidence="1">
    <location>
        <position position="150"/>
    </location>
    <ligand>
        <name>[4Fe-4S] cluster</name>
        <dbReference type="ChEBI" id="CHEBI:49883"/>
        <label>2</label>
        <note>4Fe-4S-S-AdoMet</note>
    </ligand>
</feature>
<feature type="binding site" evidence="1">
    <location>
        <position position="154"/>
    </location>
    <ligand>
        <name>[4Fe-4S] cluster</name>
        <dbReference type="ChEBI" id="CHEBI:49883"/>
        <label>2</label>
        <note>4Fe-4S-S-AdoMet</note>
    </ligand>
</feature>
<feature type="binding site" evidence="1">
    <location>
        <position position="157"/>
    </location>
    <ligand>
        <name>[4Fe-4S] cluster</name>
        <dbReference type="ChEBI" id="CHEBI:49883"/>
        <label>2</label>
        <note>4Fe-4S-S-AdoMet</note>
    </ligand>
</feature>
<dbReference type="EC" id="2.8.4.4" evidence="1"/>
<dbReference type="EMBL" id="CU928145">
    <property type="protein sequence ID" value="CAU96745.1"/>
    <property type="molecule type" value="Genomic_DNA"/>
</dbReference>
<dbReference type="RefSeq" id="WP_000049367.1">
    <property type="nucleotide sequence ID" value="NZ_CP028304.1"/>
</dbReference>
<dbReference type="SMR" id="B7LCB8"/>
<dbReference type="GeneID" id="75204700"/>
<dbReference type="KEGG" id="eck:EC55989_0880"/>
<dbReference type="HOGENOM" id="CLU_018697_0_0_6"/>
<dbReference type="Proteomes" id="UP000000746">
    <property type="component" value="Chromosome"/>
</dbReference>
<dbReference type="GO" id="GO:0005829">
    <property type="term" value="C:cytosol"/>
    <property type="evidence" value="ECO:0007669"/>
    <property type="project" value="TreeGrafter"/>
</dbReference>
<dbReference type="GO" id="GO:0051539">
    <property type="term" value="F:4 iron, 4 sulfur cluster binding"/>
    <property type="evidence" value="ECO:0007669"/>
    <property type="project" value="UniProtKB-UniRule"/>
</dbReference>
<dbReference type="GO" id="GO:0035599">
    <property type="term" value="F:aspartic acid methylthiotransferase activity"/>
    <property type="evidence" value="ECO:0007669"/>
    <property type="project" value="TreeGrafter"/>
</dbReference>
<dbReference type="GO" id="GO:0046872">
    <property type="term" value="F:metal ion binding"/>
    <property type="evidence" value="ECO:0007669"/>
    <property type="project" value="UniProtKB-KW"/>
</dbReference>
<dbReference type="GO" id="GO:0103039">
    <property type="term" value="F:protein methylthiotransferase activity"/>
    <property type="evidence" value="ECO:0007669"/>
    <property type="project" value="UniProtKB-EC"/>
</dbReference>
<dbReference type="GO" id="GO:0006400">
    <property type="term" value="P:tRNA modification"/>
    <property type="evidence" value="ECO:0007669"/>
    <property type="project" value="InterPro"/>
</dbReference>
<dbReference type="CDD" id="cd01335">
    <property type="entry name" value="Radical_SAM"/>
    <property type="match status" value="1"/>
</dbReference>
<dbReference type="FunFam" id="2.40.50.140:FF:000060">
    <property type="entry name" value="Ribosomal protein S12 methylthiotransferase RimO"/>
    <property type="match status" value="1"/>
</dbReference>
<dbReference type="FunFam" id="3.40.50.12160:FF:000002">
    <property type="entry name" value="Ribosomal protein S12 methylthiotransferase RimO"/>
    <property type="match status" value="1"/>
</dbReference>
<dbReference type="FunFam" id="3.80.30.20:FF:000001">
    <property type="entry name" value="tRNA-2-methylthio-N(6)-dimethylallyladenosine synthase 2"/>
    <property type="match status" value="1"/>
</dbReference>
<dbReference type="Gene3D" id="3.40.50.12160">
    <property type="entry name" value="Methylthiotransferase, N-terminal domain"/>
    <property type="match status" value="1"/>
</dbReference>
<dbReference type="Gene3D" id="2.40.50.140">
    <property type="entry name" value="Nucleic acid-binding proteins"/>
    <property type="match status" value="1"/>
</dbReference>
<dbReference type="Gene3D" id="3.80.30.20">
    <property type="entry name" value="tm_1862 like domain"/>
    <property type="match status" value="1"/>
</dbReference>
<dbReference type="HAMAP" id="MF_01865">
    <property type="entry name" value="MTTase_RimO"/>
    <property type="match status" value="1"/>
</dbReference>
<dbReference type="InterPro" id="IPR006638">
    <property type="entry name" value="Elp3/MiaA/NifB-like_rSAM"/>
</dbReference>
<dbReference type="InterPro" id="IPR005839">
    <property type="entry name" value="Methylthiotransferase"/>
</dbReference>
<dbReference type="InterPro" id="IPR020612">
    <property type="entry name" value="Methylthiotransferase_CS"/>
</dbReference>
<dbReference type="InterPro" id="IPR013848">
    <property type="entry name" value="Methylthiotransferase_N"/>
</dbReference>
<dbReference type="InterPro" id="IPR038135">
    <property type="entry name" value="Methylthiotransferase_N_sf"/>
</dbReference>
<dbReference type="InterPro" id="IPR012340">
    <property type="entry name" value="NA-bd_OB-fold"/>
</dbReference>
<dbReference type="InterPro" id="IPR005840">
    <property type="entry name" value="Ribosomal_uS12_MeSTrfase_RimO"/>
</dbReference>
<dbReference type="InterPro" id="IPR007197">
    <property type="entry name" value="rSAM"/>
</dbReference>
<dbReference type="InterPro" id="IPR023404">
    <property type="entry name" value="rSAM_horseshoe"/>
</dbReference>
<dbReference type="InterPro" id="IPR002792">
    <property type="entry name" value="TRAM_dom"/>
</dbReference>
<dbReference type="NCBIfam" id="TIGR01125">
    <property type="entry name" value="30S ribosomal protein S12 methylthiotransferase RimO"/>
    <property type="match status" value="1"/>
</dbReference>
<dbReference type="NCBIfam" id="TIGR00089">
    <property type="entry name" value="MiaB/RimO family radical SAM methylthiotransferase"/>
    <property type="match status" value="1"/>
</dbReference>
<dbReference type="PANTHER" id="PTHR43837">
    <property type="entry name" value="RIBOSOMAL PROTEIN S12 METHYLTHIOTRANSFERASE RIMO"/>
    <property type="match status" value="1"/>
</dbReference>
<dbReference type="PANTHER" id="PTHR43837:SF1">
    <property type="entry name" value="RIBOSOMAL PROTEIN US12 METHYLTHIOTRANSFERASE RIMO"/>
    <property type="match status" value="1"/>
</dbReference>
<dbReference type="Pfam" id="PF04055">
    <property type="entry name" value="Radical_SAM"/>
    <property type="match status" value="1"/>
</dbReference>
<dbReference type="Pfam" id="PF18693">
    <property type="entry name" value="TRAM_2"/>
    <property type="match status" value="1"/>
</dbReference>
<dbReference type="Pfam" id="PF00919">
    <property type="entry name" value="UPF0004"/>
    <property type="match status" value="1"/>
</dbReference>
<dbReference type="SFLD" id="SFLDG01082">
    <property type="entry name" value="B12-binding_domain_containing"/>
    <property type="match status" value="1"/>
</dbReference>
<dbReference type="SFLD" id="SFLDS00029">
    <property type="entry name" value="Radical_SAM"/>
    <property type="match status" value="1"/>
</dbReference>
<dbReference type="SFLD" id="SFLDF00274">
    <property type="entry name" value="ribosomal_protein_S12_methylth"/>
    <property type="match status" value="1"/>
</dbReference>
<dbReference type="SMART" id="SM00729">
    <property type="entry name" value="Elp3"/>
    <property type="match status" value="1"/>
</dbReference>
<dbReference type="SUPFAM" id="SSF102114">
    <property type="entry name" value="Radical SAM enzymes"/>
    <property type="match status" value="1"/>
</dbReference>
<dbReference type="PROSITE" id="PS51449">
    <property type="entry name" value="MTTASE_N"/>
    <property type="match status" value="1"/>
</dbReference>
<dbReference type="PROSITE" id="PS01278">
    <property type="entry name" value="MTTASE_RADICAL"/>
    <property type="match status" value="1"/>
</dbReference>
<dbReference type="PROSITE" id="PS51918">
    <property type="entry name" value="RADICAL_SAM"/>
    <property type="match status" value="1"/>
</dbReference>
<dbReference type="PROSITE" id="PS50926">
    <property type="entry name" value="TRAM"/>
    <property type="match status" value="1"/>
</dbReference>